<name>ASTA_SALEP</name>
<gene>
    <name evidence="1" type="primary">astA</name>
    <name type="ordered locus">SEN1739</name>
</gene>
<organism>
    <name type="scientific">Salmonella enteritidis PT4 (strain P125109)</name>
    <dbReference type="NCBI Taxonomy" id="550537"/>
    <lineage>
        <taxon>Bacteria</taxon>
        <taxon>Pseudomonadati</taxon>
        <taxon>Pseudomonadota</taxon>
        <taxon>Gammaproteobacteria</taxon>
        <taxon>Enterobacterales</taxon>
        <taxon>Enterobacteriaceae</taxon>
        <taxon>Salmonella</taxon>
    </lineage>
</organism>
<protein>
    <recommendedName>
        <fullName evidence="1">Arginine N-succinyltransferase</fullName>
        <shortName evidence="1">AST</shortName>
        <ecNumber evidence="1">2.3.1.109</ecNumber>
    </recommendedName>
    <alternativeName>
        <fullName evidence="1">AOST</fullName>
    </alternativeName>
</protein>
<evidence type="ECO:0000255" key="1">
    <source>
        <dbReference type="HAMAP-Rule" id="MF_01171"/>
    </source>
</evidence>
<proteinExistence type="inferred from homology"/>
<comment type="function">
    <text evidence="1">Catalyzes the transfer of succinyl-CoA to arginine to produce N(2)-succinylarginine.</text>
</comment>
<comment type="catalytic activity">
    <reaction evidence="1">
        <text>succinyl-CoA + L-arginine = N(2)-succinyl-L-arginine + CoA + H(+)</text>
        <dbReference type="Rhea" id="RHEA:15185"/>
        <dbReference type="ChEBI" id="CHEBI:15378"/>
        <dbReference type="ChEBI" id="CHEBI:32682"/>
        <dbReference type="ChEBI" id="CHEBI:57287"/>
        <dbReference type="ChEBI" id="CHEBI:57292"/>
        <dbReference type="ChEBI" id="CHEBI:58241"/>
        <dbReference type="EC" id="2.3.1.109"/>
    </reaction>
</comment>
<comment type="pathway">
    <text evidence="1">Amino-acid degradation; L-arginine degradation via AST pathway; L-glutamate and succinate from L-arginine: step 1/5.</text>
</comment>
<comment type="similarity">
    <text evidence="1">Belongs to the arginine N-succinyltransferase family.</text>
</comment>
<accession>B5QWI9</accession>
<keyword id="KW-0012">Acyltransferase</keyword>
<keyword id="KW-0056">Arginine metabolism</keyword>
<keyword id="KW-0808">Transferase</keyword>
<reference key="1">
    <citation type="journal article" date="2008" name="Genome Res.">
        <title>Comparative genome analysis of Salmonella enteritidis PT4 and Salmonella gallinarum 287/91 provides insights into evolutionary and host adaptation pathways.</title>
        <authorList>
            <person name="Thomson N.R."/>
            <person name="Clayton D.J."/>
            <person name="Windhorst D."/>
            <person name="Vernikos G."/>
            <person name="Davidson S."/>
            <person name="Churcher C."/>
            <person name="Quail M.A."/>
            <person name="Stevens M."/>
            <person name="Jones M.A."/>
            <person name="Watson M."/>
            <person name="Barron A."/>
            <person name="Layton A."/>
            <person name="Pickard D."/>
            <person name="Kingsley R.A."/>
            <person name="Bignell A."/>
            <person name="Clark L."/>
            <person name="Harris B."/>
            <person name="Ormond D."/>
            <person name="Abdellah Z."/>
            <person name="Brooks K."/>
            <person name="Cherevach I."/>
            <person name="Chillingworth T."/>
            <person name="Woodward J."/>
            <person name="Norberczak H."/>
            <person name="Lord A."/>
            <person name="Arrowsmith C."/>
            <person name="Jagels K."/>
            <person name="Moule S."/>
            <person name="Mungall K."/>
            <person name="Saunders M."/>
            <person name="Whitehead S."/>
            <person name="Chabalgoity J.A."/>
            <person name="Maskell D."/>
            <person name="Humphreys T."/>
            <person name="Roberts M."/>
            <person name="Barrow P.A."/>
            <person name="Dougan G."/>
            <person name="Parkhill J."/>
        </authorList>
    </citation>
    <scope>NUCLEOTIDE SEQUENCE [LARGE SCALE GENOMIC DNA]</scope>
    <source>
        <strain>P125109</strain>
    </source>
</reference>
<sequence>MRVIRPVEHADIAALMQLAGKTGGGLTSLPANEATLAARIERALKTWSGELPKGEQGYVFVLEDSETGEVGGICAIEVAVGLNDPWYNYRVGTLVHASKELNVYNALPTLFLSNDHTGSSELCTLFLDPEWRKEGNGYLLSKSRFMFMAAFRDKFNEKVVAEMRGVIDEHGYSPFWQSLGKRFFSMDFSRADFLCGTGQKAFIAELMPKHPIYTHFLSEEAQAVIGEVHPQTAPARAVLEKEGFRYRHYIDIFDGGPTLECDIDRVRAIRKSRLVEVAEGQPAPGDYPACLVANENYHHFRAALVRADPQTSRLVLTAAQLDALKCRAGDHVRLVRLCAEEKTV</sequence>
<dbReference type="EC" id="2.3.1.109" evidence="1"/>
<dbReference type="EMBL" id="AM933172">
    <property type="protein sequence ID" value="CAR33320.1"/>
    <property type="molecule type" value="Genomic_DNA"/>
</dbReference>
<dbReference type="RefSeq" id="WP_001263889.1">
    <property type="nucleotide sequence ID" value="NC_011294.1"/>
</dbReference>
<dbReference type="SMR" id="B5QWI9"/>
<dbReference type="KEGG" id="set:SEN1739"/>
<dbReference type="HOGENOM" id="CLU_057655_0_0_6"/>
<dbReference type="UniPathway" id="UPA00185">
    <property type="reaction ID" value="UER00279"/>
</dbReference>
<dbReference type="Proteomes" id="UP000000613">
    <property type="component" value="Chromosome"/>
</dbReference>
<dbReference type="GO" id="GO:0008791">
    <property type="term" value="F:arginine N-succinyltransferase activity"/>
    <property type="evidence" value="ECO:0007669"/>
    <property type="project" value="UniProtKB-UniRule"/>
</dbReference>
<dbReference type="GO" id="GO:0019544">
    <property type="term" value="P:arginine catabolic process to glutamate"/>
    <property type="evidence" value="ECO:0007669"/>
    <property type="project" value="UniProtKB-UniRule"/>
</dbReference>
<dbReference type="GO" id="GO:0019545">
    <property type="term" value="P:arginine catabolic process to succinate"/>
    <property type="evidence" value="ECO:0007669"/>
    <property type="project" value="UniProtKB-UniRule"/>
</dbReference>
<dbReference type="Gene3D" id="2.40.40.20">
    <property type="match status" value="1"/>
</dbReference>
<dbReference type="Gene3D" id="3.40.630.30">
    <property type="match status" value="1"/>
</dbReference>
<dbReference type="HAMAP" id="MF_01171">
    <property type="entry name" value="AstA"/>
    <property type="match status" value="1"/>
</dbReference>
<dbReference type="InterPro" id="IPR016181">
    <property type="entry name" value="Acyl_CoA_acyltransferase"/>
</dbReference>
<dbReference type="InterPro" id="IPR007041">
    <property type="entry name" value="Arg_succinylTrfase_AstA/AruG"/>
</dbReference>
<dbReference type="InterPro" id="IPR017650">
    <property type="entry name" value="Arginine_N-succinylTrfase"/>
</dbReference>
<dbReference type="NCBIfam" id="TIGR03243">
    <property type="entry name" value="arg_catab_AOST"/>
    <property type="match status" value="1"/>
</dbReference>
<dbReference type="NCBIfam" id="TIGR03244">
    <property type="entry name" value="arg_catab_AstA"/>
    <property type="match status" value="1"/>
</dbReference>
<dbReference type="NCBIfam" id="NF007770">
    <property type="entry name" value="PRK10456.1"/>
    <property type="match status" value="1"/>
</dbReference>
<dbReference type="PANTHER" id="PTHR30420:SF1">
    <property type="entry name" value="ARGININE N-SUCCINYLTRANSFERASE"/>
    <property type="match status" value="1"/>
</dbReference>
<dbReference type="PANTHER" id="PTHR30420">
    <property type="entry name" value="N-SUCCINYLARGININE DIHYDROLASE"/>
    <property type="match status" value="1"/>
</dbReference>
<dbReference type="Pfam" id="PF04958">
    <property type="entry name" value="AstA"/>
    <property type="match status" value="1"/>
</dbReference>
<dbReference type="SUPFAM" id="SSF55729">
    <property type="entry name" value="Acyl-CoA N-acyltransferases (Nat)"/>
    <property type="match status" value="1"/>
</dbReference>
<feature type="chain" id="PRO_1000137986" description="Arginine N-succinyltransferase">
    <location>
        <begin position="1"/>
        <end position="344"/>
    </location>
</feature>
<feature type="active site" description="Proton donor" evidence="1">
    <location>
        <position position="229"/>
    </location>
</feature>
<feature type="binding site" evidence="1">
    <location>
        <position position="125"/>
    </location>
    <ligand>
        <name>succinyl-CoA</name>
        <dbReference type="ChEBI" id="CHEBI:57292"/>
    </ligand>
</feature>